<protein>
    <recommendedName>
        <fullName evidence="1">UDP-N-acetylglucosamine 1-carboxyvinyltransferase</fullName>
        <ecNumber evidence="1">2.5.1.7</ecNumber>
    </recommendedName>
    <alternativeName>
        <fullName evidence="1">Enoylpyruvate transferase</fullName>
    </alternativeName>
    <alternativeName>
        <fullName evidence="1">UDP-N-acetylglucosamine enolpyruvyl transferase</fullName>
        <shortName evidence="1">EPT</shortName>
    </alternativeName>
</protein>
<name>MURA_COLP3</name>
<evidence type="ECO:0000255" key="1">
    <source>
        <dbReference type="HAMAP-Rule" id="MF_00111"/>
    </source>
</evidence>
<comment type="function">
    <text evidence="1">Cell wall formation. Adds enolpyruvyl to UDP-N-acetylglucosamine.</text>
</comment>
<comment type="catalytic activity">
    <reaction evidence="1">
        <text>phosphoenolpyruvate + UDP-N-acetyl-alpha-D-glucosamine = UDP-N-acetyl-3-O-(1-carboxyvinyl)-alpha-D-glucosamine + phosphate</text>
        <dbReference type="Rhea" id="RHEA:18681"/>
        <dbReference type="ChEBI" id="CHEBI:43474"/>
        <dbReference type="ChEBI" id="CHEBI:57705"/>
        <dbReference type="ChEBI" id="CHEBI:58702"/>
        <dbReference type="ChEBI" id="CHEBI:68483"/>
        <dbReference type="EC" id="2.5.1.7"/>
    </reaction>
</comment>
<comment type="pathway">
    <text evidence="1">Cell wall biogenesis; peptidoglycan biosynthesis.</text>
</comment>
<comment type="subcellular location">
    <subcellularLocation>
        <location evidence="1">Cytoplasm</location>
    </subcellularLocation>
</comment>
<comment type="similarity">
    <text evidence="1">Belongs to the EPSP synthase family. MurA subfamily.</text>
</comment>
<organism>
    <name type="scientific">Colwellia psychrerythraea (strain 34H / ATCC BAA-681)</name>
    <name type="common">Vibrio psychroerythus</name>
    <dbReference type="NCBI Taxonomy" id="167879"/>
    <lineage>
        <taxon>Bacteria</taxon>
        <taxon>Pseudomonadati</taxon>
        <taxon>Pseudomonadota</taxon>
        <taxon>Gammaproteobacteria</taxon>
        <taxon>Alteromonadales</taxon>
        <taxon>Colwelliaceae</taxon>
        <taxon>Colwellia</taxon>
    </lineage>
</organism>
<keyword id="KW-0131">Cell cycle</keyword>
<keyword id="KW-0132">Cell division</keyword>
<keyword id="KW-0133">Cell shape</keyword>
<keyword id="KW-0961">Cell wall biogenesis/degradation</keyword>
<keyword id="KW-0963">Cytoplasm</keyword>
<keyword id="KW-0573">Peptidoglycan synthesis</keyword>
<keyword id="KW-0670">Pyruvate</keyword>
<keyword id="KW-0808">Transferase</keyword>
<sequence length="420" mass="44366">MDAFKVIGGKPLRGDVVISGAKNAALPILMSALLSKTPVVFSNVPQLNDILTTVKLLGQLGAKTKWLNEEKLMIDASSIDVCRAPYDLVKTMRASILVLGPLLARMGHAEVSLPGGCAIGARPVNLHIQGLKLMGADITVEDGYIVAKKQGRLTGATIFMDTVSVTGTENLMMAAALAEGITIIENAAREPEIVDLANCLISMGAKITGAGTDTLTIEGVSELCGKEYSVMPDRIETGTFLVAAAVTQGHIKCLNTDPSSLEAVLSKLQEAGATITTGDDWIELEMSAPAKAVNVRTAPHPAFPTDMQAQFMTMNVLAEGTATVIETIFENRFMHVPELQRMGADIALEGNTAIVKGVASLNGAQVMATDLRASASLVIAGLVAKSPTQVDRIYHIDRGYLCIEGKLQSLGADITRIKVD</sequence>
<reference key="1">
    <citation type="journal article" date="2005" name="Proc. Natl. Acad. Sci. U.S.A.">
        <title>The psychrophilic lifestyle as revealed by the genome sequence of Colwellia psychrerythraea 34H through genomic and proteomic analyses.</title>
        <authorList>
            <person name="Methe B.A."/>
            <person name="Nelson K.E."/>
            <person name="Deming J.W."/>
            <person name="Momen B."/>
            <person name="Melamud E."/>
            <person name="Zhang X."/>
            <person name="Moult J."/>
            <person name="Madupu R."/>
            <person name="Nelson W.C."/>
            <person name="Dodson R.J."/>
            <person name="Brinkac L.M."/>
            <person name="Daugherty S.C."/>
            <person name="Durkin A.S."/>
            <person name="DeBoy R.T."/>
            <person name="Kolonay J.F."/>
            <person name="Sullivan S.A."/>
            <person name="Zhou L."/>
            <person name="Davidsen T.M."/>
            <person name="Wu M."/>
            <person name="Huston A.L."/>
            <person name="Lewis M."/>
            <person name="Weaver B."/>
            <person name="Weidman J.F."/>
            <person name="Khouri H."/>
            <person name="Utterback T.R."/>
            <person name="Feldblyum T.V."/>
            <person name="Fraser C.M."/>
        </authorList>
    </citation>
    <scope>NUCLEOTIDE SEQUENCE [LARGE SCALE GENOMIC DNA]</scope>
    <source>
        <strain>34H / ATCC BAA-681</strain>
    </source>
</reference>
<proteinExistence type="inferred from homology"/>
<feature type="chain" id="PRO_0000231193" description="UDP-N-acetylglucosamine 1-carboxyvinyltransferase">
    <location>
        <begin position="1"/>
        <end position="420"/>
    </location>
</feature>
<feature type="active site" description="Proton donor" evidence="1">
    <location>
        <position position="117"/>
    </location>
</feature>
<feature type="binding site" evidence="1">
    <location>
        <begin position="22"/>
        <end position="23"/>
    </location>
    <ligand>
        <name>phosphoenolpyruvate</name>
        <dbReference type="ChEBI" id="CHEBI:58702"/>
    </ligand>
</feature>
<feature type="binding site" evidence="1">
    <location>
        <position position="93"/>
    </location>
    <ligand>
        <name>UDP-N-acetyl-alpha-D-glucosamine</name>
        <dbReference type="ChEBI" id="CHEBI:57705"/>
    </ligand>
</feature>
<feature type="binding site" evidence="1">
    <location>
        <position position="306"/>
    </location>
    <ligand>
        <name>UDP-N-acetyl-alpha-D-glucosamine</name>
        <dbReference type="ChEBI" id="CHEBI:57705"/>
    </ligand>
</feature>
<feature type="binding site" evidence="1">
    <location>
        <position position="328"/>
    </location>
    <ligand>
        <name>UDP-N-acetyl-alpha-D-glucosamine</name>
        <dbReference type="ChEBI" id="CHEBI:57705"/>
    </ligand>
</feature>
<feature type="modified residue" description="2-(S-cysteinyl)pyruvic acid O-phosphothioketal" evidence="1">
    <location>
        <position position="117"/>
    </location>
</feature>
<dbReference type="EC" id="2.5.1.7" evidence="1"/>
<dbReference type="EMBL" id="CP000083">
    <property type="protein sequence ID" value="AAZ26612.1"/>
    <property type="molecule type" value="Genomic_DNA"/>
</dbReference>
<dbReference type="RefSeq" id="WP_011045259.1">
    <property type="nucleotide sequence ID" value="NC_003910.7"/>
</dbReference>
<dbReference type="SMR" id="Q47VJ4"/>
<dbReference type="STRING" id="167879.CPS_4530"/>
<dbReference type="KEGG" id="cps:CPS_4530"/>
<dbReference type="eggNOG" id="COG0766">
    <property type="taxonomic scope" value="Bacteria"/>
</dbReference>
<dbReference type="HOGENOM" id="CLU_027387_0_0_6"/>
<dbReference type="UniPathway" id="UPA00219"/>
<dbReference type="Proteomes" id="UP000000547">
    <property type="component" value="Chromosome"/>
</dbReference>
<dbReference type="GO" id="GO:0005737">
    <property type="term" value="C:cytoplasm"/>
    <property type="evidence" value="ECO:0007669"/>
    <property type="project" value="UniProtKB-SubCell"/>
</dbReference>
<dbReference type="GO" id="GO:0008760">
    <property type="term" value="F:UDP-N-acetylglucosamine 1-carboxyvinyltransferase activity"/>
    <property type="evidence" value="ECO:0007669"/>
    <property type="project" value="UniProtKB-UniRule"/>
</dbReference>
<dbReference type="GO" id="GO:0051301">
    <property type="term" value="P:cell division"/>
    <property type="evidence" value="ECO:0007669"/>
    <property type="project" value="UniProtKB-KW"/>
</dbReference>
<dbReference type="GO" id="GO:0071555">
    <property type="term" value="P:cell wall organization"/>
    <property type="evidence" value="ECO:0007669"/>
    <property type="project" value="UniProtKB-KW"/>
</dbReference>
<dbReference type="GO" id="GO:0009252">
    <property type="term" value="P:peptidoglycan biosynthetic process"/>
    <property type="evidence" value="ECO:0007669"/>
    <property type="project" value="UniProtKB-UniRule"/>
</dbReference>
<dbReference type="GO" id="GO:0008360">
    <property type="term" value="P:regulation of cell shape"/>
    <property type="evidence" value="ECO:0007669"/>
    <property type="project" value="UniProtKB-KW"/>
</dbReference>
<dbReference type="GO" id="GO:0019277">
    <property type="term" value="P:UDP-N-acetylgalactosamine biosynthetic process"/>
    <property type="evidence" value="ECO:0007669"/>
    <property type="project" value="InterPro"/>
</dbReference>
<dbReference type="CDD" id="cd01555">
    <property type="entry name" value="UdpNAET"/>
    <property type="match status" value="1"/>
</dbReference>
<dbReference type="FunFam" id="3.65.10.10:FF:000002">
    <property type="entry name" value="UDP-N-acetylglucosamine 1-carboxyvinyltransferase"/>
    <property type="match status" value="1"/>
</dbReference>
<dbReference type="Gene3D" id="3.65.10.10">
    <property type="entry name" value="Enolpyruvate transferase domain"/>
    <property type="match status" value="2"/>
</dbReference>
<dbReference type="HAMAP" id="MF_00111">
    <property type="entry name" value="MurA"/>
    <property type="match status" value="1"/>
</dbReference>
<dbReference type="InterPro" id="IPR001986">
    <property type="entry name" value="Enolpyruvate_Tfrase_dom"/>
</dbReference>
<dbReference type="InterPro" id="IPR036968">
    <property type="entry name" value="Enolpyruvate_Tfrase_sf"/>
</dbReference>
<dbReference type="InterPro" id="IPR050068">
    <property type="entry name" value="MurA_subfamily"/>
</dbReference>
<dbReference type="InterPro" id="IPR013792">
    <property type="entry name" value="RNA3'P_cycl/enolpyr_Trfase_a/b"/>
</dbReference>
<dbReference type="InterPro" id="IPR005750">
    <property type="entry name" value="UDP_GlcNAc_COvinyl_MurA"/>
</dbReference>
<dbReference type="NCBIfam" id="TIGR01072">
    <property type="entry name" value="murA"/>
    <property type="match status" value="1"/>
</dbReference>
<dbReference type="NCBIfam" id="NF006873">
    <property type="entry name" value="PRK09369.1"/>
    <property type="match status" value="1"/>
</dbReference>
<dbReference type="PANTHER" id="PTHR43783">
    <property type="entry name" value="UDP-N-ACETYLGLUCOSAMINE 1-CARBOXYVINYLTRANSFERASE"/>
    <property type="match status" value="1"/>
</dbReference>
<dbReference type="PANTHER" id="PTHR43783:SF1">
    <property type="entry name" value="UDP-N-ACETYLGLUCOSAMINE 1-CARBOXYVINYLTRANSFERASE"/>
    <property type="match status" value="1"/>
</dbReference>
<dbReference type="Pfam" id="PF00275">
    <property type="entry name" value="EPSP_synthase"/>
    <property type="match status" value="1"/>
</dbReference>
<dbReference type="SUPFAM" id="SSF55205">
    <property type="entry name" value="EPT/RTPC-like"/>
    <property type="match status" value="1"/>
</dbReference>
<gene>
    <name evidence="1" type="primary">murA</name>
    <name type="ordered locus">CPS_4530</name>
</gene>
<accession>Q47VJ4</accession>